<protein>
    <recommendedName>
        <fullName>Flowering-promoting factor 1</fullName>
        <shortName>SaFPF1</shortName>
    </recommendedName>
</protein>
<reference key="1">
    <citation type="journal article" date="1997" name="Plant Cell">
        <title>FPF1 promotes flowering in Arabidopsis.</title>
        <authorList>
            <person name="Kania T."/>
            <person name="Russenberger D."/>
            <person name="Peng S."/>
            <person name="Apel K."/>
            <person name="Melzer S."/>
        </authorList>
    </citation>
    <scope>NUCLEOTIDE SEQUENCE [MRNA]</scope>
    <scope>DEVELOPMENTAL STAGE</scope>
    <scope>FUNCTION</scope>
</reference>
<accession>O24340</accession>
<organism>
    <name type="scientific">Sinapis alba</name>
    <name type="common">White mustard</name>
    <name type="synonym">Brassica hirta</name>
    <dbReference type="NCBI Taxonomy" id="3728"/>
    <lineage>
        <taxon>Eukaryota</taxon>
        <taxon>Viridiplantae</taxon>
        <taxon>Streptophyta</taxon>
        <taxon>Embryophyta</taxon>
        <taxon>Tracheophyta</taxon>
        <taxon>Spermatophyta</taxon>
        <taxon>Magnoliopsida</taxon>
        <taxon>eudicotyledons</taxon>
        <taxon>Gunneridae</taxon>
        <taxon>Pentapetalae</taxon>
        <taxon>rosids</taxon>
        <taxon>malvids</taxon>
        <taxon>Brassicales</taxon>
        <taxon>Brassicaceae</taxon>
        <taxon>Brassiceae</taxon>
        <taxon>Sinapis</taxon>
    </lineage>
</organism>
<name>FPF1_SINAL</name>
<evidence type="ECO:0000269" key="1">
    <source>
    </source>
</evidence>
<evidence type="ECO:0000305" key="2"/>
<comment type="function">
    <text evidence="1">Modulates the competence to flowering of apical meristems.</text>
</comment>
<comment type="developmental stage">
    <text evidence="1">After the photoperiodic induction of flowering and in early transition stages, expression is only detectable in the peripheral zone of apical meristems. Later on, it can also be found in floral meristems and in axillary meristems that form secondary inflorescences.</text>
</comment>
<comment type="similarity">
    <text evidence="2">Belongs to the FPF1 family.</text>
</comment>
<sequence length="110" mass="12615">MSGVWVFKNGVIRLVENPNQSGGDTNSRRKVMVYLPTGEVISSYSTLEQILRSLGWERYFGGGDTDLLQFHKRSSIDLISLPKDFTKFSSVYMYDIVVKNPNYFHVRDSN</sequence>
<feature type="chain" id="PRO_0000417313" description="Flowering-promoting factor 1">
    <location>
        <begin position="1"/>
        <end position="110"/>
    </location>
</feature>
<dbReference type="EMBL" id="Y11987">
    <property type="protein sequence ID" value="CAA72716.1"/>
    <property type="molecule type" value="mRNA"/>
</dbReference>
<dbReference type="PIR" id="T10451">
    <property type="entry name" value="T10451"/>
</dbReference>
<dbReference type="OrthoDB" id="612242at2759"/>
<dbReference type="GO" id="GO:0009909">
    <property type="term" value="P:regulation of flower development"/>
    <property type="evidence" value="ECO:0007669"/>
    <property type="project" value="InterPro"/>
</dbReference>
<dbReference type="InterPro" id="IPR039274">
    <property type="entry name" value="FPF1"/>
</dbReference>
<dbReference type="PANTHER" id="PTHR33433">
    <property type="entry name" value="FLOWERING-PROMOTING FACTOR 1-LIKE PROTEIN 1"/>
    <property type="match status" value="1"/>
</dbReference>
<proteinExistence type="evidence at transcript level"/>
<gene>
    <name type="primary">FPF1</name>
</gene>